<sequence>MAHTNDTIADMLTRIRNATMARHESVAVPATRMTRSIARVLHEEGFVSEWKEEGEGIQARVVLRLKYKGKGRNCRPIINGLKRVSRPGLRVYRNHKELPRVLGGIGIAIISTSNGIMTDREARKQGIGGEVLCLVY</sequence>
<keyword id="KW-1185">Reference proteome</keyword>
<keyword id="KW-0687">Ribonucleoprotein</keyword>
<keyword id="KW-0689">Ribosomal protein</keyword>
<keyword id="KW-0694">RNA-binding</keyword>
<keyword id="KW-0699">rRNA-binding</keyword>
<evidence type="ECO:0000255" key="1">
    <source>
        <dbReference type="HAMAP-Rule" id="MF_01302"/>
    </source>
</evidence>
<evidence type="ECO:0000305" key="2"/>
<reference key="1">
    <citation type="journal article" date="2007" name="ISME J.">
        <title>Population level functional diversity in a microbial community revealed by comparative genomic and metagenomic analyses.</title>
        <authorList>
            <person name="Bhaya D."/>
            <person name="Grossman A.R."/>
            <person name="Steunou A.-S."/>
            <person name="Khuri N."/>
            <person name="Cohan F.M."/>
            <person name="Hamamura N."/>
            <person name="Melendrez M.C."/>
            <person name="Bateson M.M."/>
            <person name="Ward D.M."/>
            <person name="Heidelberg J.F."/>
        </authorList>
    </citation>
    <scope>NUCLEOTIDE SEQUENCE [LARGE SCALE GENOMIC DNA]</scope>
    <source>
        <strain>JA-2-3B'a(2-13)</strain>
    </source>
</reference>
<gene>
    <name evidence="1" type="primary">rpsH</name>
    <name evidence="1" type="synonym">rps8</name>
    <name type="ordered locus">CYB_2610</name>
</gene>
<accession>Q2JIL4</accession>
<protein>
    <recommendedName>
        <fullName evidence="1">Small ribosomal subunit protein uS8</fullName>
    </recommendedName>
    <alternativeName>
        <fullName evidence="2">30S ribosomal protein S8</fullName>
    </alternativeName>
</protein>
<feature type="chain" id="PRO_0000290951" description="Small ribosomal subunit protein uS8">
    <location>
        <begin position="1"/>
        <end position="136"/>
    </location>
</feature>
<comment type="function">
    <text evidence="1">One of the primary rRNA binding proteins, it binds directly to 16S rRNA central domain where it helps coordinate assembly of the platform of the 30S subunit.</text>
</comment>
<comment type="subunit">
    <text evidence="1">Part of the 30S ribosomal subunit. Contacts proteins S5 and S12.</text>
</comment>
<comment type="similarity">
    <text evidence="1">Belongs to the universal ribosomal protein uS8 family.</text>
</comment>
<dbReference type="EMBL" id="CP000240">
    <property type="protein sequence ID" value="ABD03540.1"/>
    <property type="molecule type" value="Genomic_DNA"/>
</dbReference>
<dbReference type="RefSeq" id="WP_011434165.1">
    <property type="nucleotide sequence ID" value="NC_007776.1"/>
</dbReference>
<dbReference type="SMR" id="Q2JIL4"/>
<dbReference type="STRING" id="321332.CYB_2610"/>
<dbReference type="KEGG" id="cyb:CYB_2610"/>
<dbReference type="eggNOG" id="COG0096">
    <property type="taxonomic scope" value="Bacteria"/>
</dbReference>
<dbReference type="HOGENOM" id="CLU_098428_0_2_3"/>
<dbReference type="OrthoDB" id="9802617at2"/>
<dbReference type="Proteomes" id="UP000001938">
    <property type="component" value="Chromosome"/>
</dbReference>
<dbReference type="GO" id="GO:1990904">
    <property type="term" value="C:ribonucleoprotein complex"/>
    <property type="evidence" value="ECO:0007669"/>
    <property type="project" value="UniProtKB-KW"/>
</dbReference>
<dbReference type="GO" id="GO:0005840">
    <property type="term" value="C:ribosome"/>
    <property type="evidence" value="ECO:0007669"/>
    <property type="project" value="UniProtKB-KW"/>
</dbReference>
<dbReference type="GO" id="GO:0019843">
    <property type="term" value="F:rRNA binding"/>
    <property type="evidence" value="ECO:0007669"/>
    <property type="project" value="UniProtKB-UniRule"/>
</dbReference>
<dbReference type="GO" id="GO:0003735">
    <property type="term" value="F:structural constituent of ribosome"/>
    <property type="evidence" value="ECO:0007669"/>
    <property type="project" value="InterPro"/>
</dbReference>
<dbReference type="GO" id="GO:0006412">
    <property type="term" value="P:translation"/>
    <property type="evidence" value="ECO:0007669"/>
    <property type="project" value="UniProtKB-UniRule"/>
</dbReference>
<dbReference type="FunFam" id="3.30.1370.30:FF:000002">
    <property type="entry name" value="30S ribosomal protein S8"/>
    <property type="match status" value="1"/>
</dbReference>
<dbReference type="FunFam" id="3.30.1490.10:FF:000001">
    <property type="entry name" value="30S ribosomal protein S8"/>
    <property type="match status" value="1"/>
</dbReference>
<dbReference type="Gene3D" id="3.30.1370.30">
    <property type="match status" value="1"/>
</dbReference>
<dbReference type="Gene3D" id="3.30.1490.10">
    <property type="match status" value="1"/>
</dbReference>
<dbReference type="HAMAP" id="MF_01302_B">
    <property type="entry name" value="Ribosomal_uS8_B"/>
    <property type="match status" value="1"/>
</dbReference>
<dbReference type="InterPro" id="IPR000630">
    <property type="entry name" value="Ribosomal_uS8"/>
</dbReference>
<dbReference type="InterPro" id="IPR047863">
    <property type="entry name" value="Ribosomal_uS8_CS"/>
</dbReference>
<dbReference type="InterPro" id="IPR035987">
    <property type="entry name" value="Ribosomal_uS8_sf"/>
</dbReference>
<dbReference type="NCBIfam" id="NF001109">
    <property type="entry name" value="PRK00136.1"/>
    <property type="match status" value="1"/>
</dbReference>
<dbReference type="PANTHER" id="PTHR11758">
    <property type="entry name" value="40S RIBOSOMAL PROTEIN S15A"/>
    <property type="match status" value="1"/>
</dbReference>
<dbReference type="Pfam" id="PF00410">
    <property type="entry name" value="Ribosomal_S8"/>
    <property type="match status" value="1"/>
</dbReference>
<dbReference type="SUPFAM" id="SSF56047">
    <property type="entry name" value="Ribosomal protein S8"/>
    <property type="match status" value="1"/>
</dbReference>
<dbReference type="PROSITE" id="PS00053">
    <property type="entry name" value="RIBOSOMAL_S8"/>
    <property type="match status" value="1"/>
</dbReference>
<proteinExistence type="inferred from homology"/>
<name>RS8_SYNJB</name>
<organism>
    <name type="scientific">Synechococcus sp. (strain JA-2-3B'a(2-13))</name>
    <name type="common">Cyanobacteria bacterium Yellowstone B-Prime</name>
    <dbReference type="NCBI Taxonomy" id="321332"/>
    <lineage>
        <taxon>Bacteria</taxon>
        <taxon>Bacillati</taxon>
        <taxon>Cyanobacteriota</taxon>
        <taxon>Cyanophyceae</taxon>
        <taxon>Synechococcales</taxon>
        <taxon>Synechococcaceae</taxon>
        <taxon>Synechococcus</taxon>
    </lineage>
</organism>